<comment type="function">
    <text evidence="1">Endo-1,5-alpha-L-arabinanase involved in degradation of pectin. Its preferred substrate is linear 1,5-alpha-L-arabinan (By similarity).</text>
</comment>
<comment type="catalytic activity">
    <reaction>
        <text>Endohydrolysis of (1-&gt;5)-alpha-arabinofuranosidic linkages in (1-&gt;5)-arabinans.</text>
        <dbReference type="EC" id="3.2.1.99"/>
    </reaction>
</comment>
<comment type="pathway">
    <text>Glycan metabolism; L-arabinan degradation.</text>
</comment>
<comment type="subcellular location">
    <subcellularLocation>
        <location evidence="1">Secreted</location>
    </subcellularLocation>
</comment>
<comment type="similarity">
    <text evidence="4">Belongs to the glycosyl hydrolase 43 family.</text>
</comment>
<organism>
    <name type="scientific">Aspergillus clavatus (strain ATCC 1007 / CBS 513.65 / DSM 816 / NCTC 3887 / NRRL 1 / QM 1276 / 107)</name>
    <dbReference type="NCBI Taxonomy" id="344612"/>
    <lineage>
        <taxon>Eukaryota</taxon>
        <taxon>Fungi</taxon>
        <taxon>Dikarya</taxon>
        <taxon>Ascomycota</taxon>
        <taxon>Pezizomycotina</taxon>
        <taxon>Eurotiomycetes</taxon>
        <taxon>Eurotiomycetidae</taxon>
        <taxon>Eurotiales</taxon>
        <taxon>Aspergillaceae</taxon>
        <taxon>Aspergillus</taxon>
        <taxon>Aspergillus subgen. Fumigati</taxon>
    </lineage>
</organism>
<feature type="signal peptide" evidence="3">
    <location>
        <begin position="1"/>
        <end position="16"/>
    </location>
</feature>
<feature type="chain" id="PRO_0000394632" description="Probable arabinan endo-1,5-alpha-L-arabinosidase C">
    <location>
        <begin position="17"/>
        <end position="319"/>
    </location>
</feature>
<feature type="active site" description="Proton acceptor" evidence="2">
    <location>
        <position position="31"/>
    </location>
</feature>
<feature type="active site" description="Proton donor" evidence="2">
    <location>
        <position position="198"/>
    </location>
</feature>
<feature type="site" description="Important for catalytic activity, responsible for pKa modulation of the active site Glu and correct orientation of both the proton donor and substrate" evidence="2">
    <location>
        <position position="146"/>
    </location>
</feature>
<feature type="glycosylation site" description="N-linked (GlcNAc...) asparagine" evidence="3">
    <location>
        <position position="190"/>
    </location>
</feature>
<feature type="glycosylation site" description="N-linked (GlcNAc...) asparagine" evidence="3">
    <location>
        <position position="222"/>
    </location>
</feature>
<keyword id="KW-0119">Carbohydrate metabolism</keyword>
<keyword id="KW-0325">Glycoprotein</keyword>
<keyword id="KW-0326">Glycosidase</keyword>
<keyword id="KW-0378">Hydrolase</keyword>
<keyword id="KW-0624">Polysaccharide degradation</keyword>
<keyword id="KW-1185">Reference proteome</keyword>
<keyword id="KW-0964">Secreted</keyword>
<keyword id="KW-0732">Signal</keyword>
<keyword id="KW-0858">Xylan degradation</keyword>
<gene>
    <name type="primary">abnC</name>
    <name type="ORF">ACLA_098980</name>
</gene>
<evidence type="ECO:0000250" key="1"/>
<evidence type="ECO:0000250" key="2">
    <source>
        <dbReference type="UniProtKB" id="P94522"/>
    </source>
</evidence>
<evidence type="ECO:0000255" key="3"/>
<evidence type="ECO:0000305" key="4"/>
<accession>A1CN18</accession>
<reference key="1">
    <citation type="journal article" date="2008" name="PLoS Genet.">
        <title>Genomic islands in the pathogenic filamentous fungus Aspergillus fumigatus.</title>
        <authorList>
            <person name="Fedorova N.D."/>
            <person name="Khaldi N."/>
            <person name="Joardar V.S."/>
            <person name="Maiti R."/>
            <person name="Amedeo P."/>
            <person name="Anderson M.J."/>
            <person name="Crabtree J."/>
            <person name="Silva J.C."/>
            <person name="Badger J.H."/>
            <person name="Albarraq A."/>
            <person name="Angiuoli S."/>
            <person name="Bussey H."/>
            <person name="Bowyer P."/>
            <person name="Cotty P.J."/>
            <person name="Dyer P.S."/>
            <person name="Egan A."/>
            <person name="Galens K."/>
            <person name="Fraser-Liggett C.M."/>
            <person name="Haas B.J."/>
            <person name="Inman J.M."/>
            <person name="Kent R."/>
            <person name="Lemieux S."/>
            <person name="Malavazi I."/>
            <person name="Orvis J."/>
            <person name="Roemer T."/>
            <person name="Ronning C.M."/>
            <person name="Sundaram J.P."/>
            <person name="Sutton G."/>
            <person name="Turner G."/>
            <person name="Venter J.C."/>
            <person name="White O.R."/>
            <person name="Whitty B.R."/>
            <person name="Youngman P."/>
            <person name="Wolfe K.H."/>
            <person name="Goldman G.H."/>
            <person name="Wortman J.R."/>
            <person name="Jiang B."/>
            <person name="Denning D.W."/>
            <person name="Nierman W.C."/>
        </authorList>
    </citation>
    <scope>NUCLEOTIDE SEQUENCE [LARGE SCALE GENOMIC DNA]</scope>
    <source>
        <strain>ATCC 1007 / CBS 513.65 / DSM 816 / NCTC 3887 / NRRL 1 / QM 1276 / 107</strain>
    </source>
</reference>
<name>ABNC_ASPCL</name>
<dbReference type="EC" id="3.2.1.99"/>
<dbReference type="EMBL" id="DS027058">
    <property type="protein sequence ID" value="EAW08955.1"/>
    <property type="molecule type" value="Genomic_DNA"/>
</dbReference>
<dbReference type="RefSeq" id="XP_001270381.1">
    <property type="nucleotide sequence ID" value="XM_001270380.1"/>
</dbReference>
<dbReference type="SMR" id="A1CN18"/>
<dbReference type="STRING" id="344612.A1CN18"/>
<dbReference type="GlyCosmos" id="A1CN18">
    <property type="glycosylation" value="2 sites, No reported glycans"/>
</dbReference>
<dbReference type="EnsemblFungi" id="EAW08955">
    <property type="protein sequence ID" value="EAW08955"/>
    <property type="gene ID" value="ACLA_098980"/>
</dbReference>
<dbReference type="GeneID" id="4702439"/>
<dbReference type="KEGG" id="act:ACLA_098980"/>
<dbReference type="VEuPathDB" id="FungiDB:ACLA_098980"/>
<dbReference type="eggNOG" id="ENOG502QTQG">
    <property type="taxonomic scope" value="Eukaryota"/>
</dbReference>
<dbReference type="HOGENOM" id="CLU_009397_5_0_1"/>
<dbReference type="OMA" id="EDYQFGW"/>
<dbReference type="OrthoDB" id="195678at2759"/>
<dbReference type="UniPathway" id="UPA00667"/>
<dbReference type="Proteomes" id="UP000006701">
    <property type="component" value="Unassembled WGS sequence"/>
</dbReference>
<dbReference type="GO" id="GO:0005576">
    <property type="term" value="C:extracellular region"/>
    <property type="evidence" value="ECO:0007669"/>
    <property type="project" value="UniProtKB-SubCell"/>
</dbReference>
<dbReference type="GO" id="GO:0046558">
    <property type="term" value="F:arabinan endo-1,5-alpha-L-arabinosidase activity"/>
    <property type="evidence" value="ECO:0007669"/>
    <property type="project" value="UniProtKB-EC"/>
</dbReference>
<dbReference type="GO" id="GO:0031222">
    <property type="term" value="P:arabinan catabolic process"/>
    <property type="evidence" value="ECO:0007669"/>
    <property type="project" value="UniProtKB-UniPathway"/>
</dbReference>
<dbReference type="GO" id="GO:0045493">
    <property type="term" value="P:xylan catabolic process"/>
    <property type="evidence" value="ECO:0007669"/>
    <property type="project" value="UniProtKB-KW"/>
</dbReference>
<dbReference type="CDD" id="cd18831">
    <property type="entry name" value="GH43_AnAbnA-like"/>
    <property type="match status" value="1"/>
</dbReference>
<dbReference type="Gene3D" id="2.115.10.20">
    <property type="entry name" value="Glycosyl hydrolase domain, family 43"/>
    <property type="match status" value="1"/>
</dbReference>
<dbReference type="InterPro" id="IPR050727">
    <property type="entry name" value="GH43_arabinanases"/>
</dbReference>
<dbReference type="InterPro" id="IPR006710">
    <property type="entry name" value="Glyco_hydro_43"/>
</dbReference>
<dbReference type="InterPro" id="IPR016840">
    <property type="entry name" value="Glyco_hydro_43_endo_a_Ara-ase"/>
</dbReference>
<dbReference type="InterPro" id="IPR023296">
    <property type="entry name" value="Glyco_hydro_beta-prop_sf"/>
</dbReference>
<dbReference type="PANTHER" id="PTHR43301">
    <property type="entry name" value="ARABINAN ENDO-1,5-ALPHA-L-ARABINOSIDASE"/>
    <property type="match status" value="1"/>
</dbReference>
<dbReference type="PANTHER" id="PTHR43301:SF7">
    <property type="entry name" value="ARABINAN ENDO-1,5-ALPHA-L-ARABINOSIDASE C"/>
    <property type="match status" value="1"/>
</dbReference>
<dbReference type="Pfam" id="PF04616">
    <property type="entry name" value="Glyco_hydro_43"/>
    <property type="match status" value="1"/>
</dbReference>
<dbReference type="PIRSF" id="PIRSF026534">
    <property type="entry name" value="Endo_alpha-L-arabinosidase"/>
    <property type="match status" value="1"/>
</dbReference>
<dbReference type="SUPFAM" id="SSF75005">
    <property type="entry name" value="Arabinanase/levansucrase/invertase"/>
    <property type="match status" value="1"/>
</dbReference>
<proteinExistence type="inferred from homology"/>
<sequence>MFVYTLIFLFLAAANAYSNPGPCSGNCWTHDPGLYQRKSDGKYFLFATGGGIHISSADDLAGPWTDDGFVLPDGSSIDLDGQNNLWAPDLHYRDGTYYLYYSVSALGSQNSAIGVATSETLEAGSWTDHGSTGVTSTPNSPYNTIDGNWIAVGDKQYLNFGSYWQNLFQVELADGLKVKEGATPHQLSYNASGIHRQEAAFMFERNSYFYLTFSGGVALGYNATWPAQGEEYHINVCRSTSATGGFVDKNGVSCLNSGGSLLLASHGFVYGPGGQGILEDRNKELVLYYHYADTRIGKAVEDYQFGWNQLKWENDWPSV</sequence>
<protein>
    <recommendedName>
        <fullName>Probable arabinan endo-1,5-alpha-L-arabinosidase C</fullName>
        <ecNumber>3.2.1.99</ecNumber>
    </recommendedName>
    <alternativeName>
        <fullName>Endo-1,5-alpha-L-arabinanase C</fullName>
        <shortName>ABN C</shortName>
    </alternativeName>
</protein>